<feature type="chain" id="PRO_0000157250" description="Protein-export membrane protein SecG">
    <location>
        <begin position="1"/>
        <end position="102"/>
    </location>
</feature>
<feature type="transmembrane region" description="Helical" evidence="2">
    <location>
        <begin position="25"/>
        <end position="45"/>
    </location>
</feature>
<feature type="transmembrane region" description="Helical" evidence="2">
    <location>
        <begin position="79"/>
        <end position="99"/>
    </location>
</feature>
<proteinExistence type="inferred from homology"/>
<reference key="1">
    <citation type="journal article" date="2002" name="Nature">
        <title>Complete genome sequence of the model actinomycete Streptomyces coelicolor A3(2).</title>
        <authorList>
            <person name="Bentley S.D."/>
            <person name="Chater K.F."/>
            <person name="Cerdeno-Tarraga A.-M."/>
            <person name="Challis G.L."/>
            <person name="Thomson N.R."/>
            <person name="James K.D."/>
            <person name="Harris D.E."/>
            <person name="Quail M.A."/>
            <person name="Kieser H."/>
            <person name="Harper D."/>
            <person name="Bateman A."/>
            <person name="Brown S."/>
            <person name="Chandra G."/>
            <person name="Chen C.W."/>
            <person name="Collins M."/>
            <person name="Cronin A."/>
            <person name="Fraser A."/>
            <person name="Goble A."/>
            <person name="Hidalgo J."/>
            <person name="Hornsby T."/>
            <person name="Howarth S."/>
            <person name="Huang C.-H."/>
            <person name="Kieser T."/>
            <person name="Larke L."/>
            <person name="Murphy L.D."/>
            <person name="Oliver K."/>
            <person name="O'Neil S."/>
            <person name="Rabbinowitsch E."/>
            <person name="Rajandream M.A."/>
            <person name="Rutherford K.M."/>
            <person name="Rutter S."/>
            <person name="Seeger K."/>
            <person name="Saunders D."/>
            <person name="Sharp S."/>
            <person name="Squares R."/>
            <person name="Squares S."/>
            <person name="Taylor K."/>
            <person name="Warren T."/>
            <person name="Wietzorrek A."/>
            <person name="Woodward J.R."/>
            <person name="Barrell B.G."/>
            <person name="Parkhill J."/>
            <person name="Hopwood D.A."/>
        </authorList>
    </citation>
    <scope>NUCLEOTIDE SEQUENCE [LARGE SCALE GENOMIC DNA]</scope>
    <source>
        <strain>ATCC BAA-471 / A3(2) / M145</strain>
    </source>
</reference>
<keyword id="KW-1003">Cell membrane</keyword>
<keyword id="KW-0472">Membrane</keyword>
<keyword id="KW-0653">Protein transport</keyword>
<keyword id="KW-1185">Reference proteome</keyword>
<keyword id="KW-0811">Translocation</keyword>
<keyword id="KW-0812">Transmembrane</keyword>
<keyword id="KW-1133">Transmembrane helix</keyword>
<keyword id="KW-0813">Transport</keyword>
<evidence type="ECO:0000250" key="1"/>
<evidence type="ECO:0000255" key="2"/>
<evidence type="ECO:0000305" key="3"/>
<gene>
    <name type="primary">secG</name>
    <name type="ordered locus">SCO1944</name>
    <name type="ORF">SCC54.04c</name>
</gene>
<accession>Q9Z521</accession>
<comment type="function">
    <text evidence="1">Involved in protein export. Participates in an early event of protein translocation (By similarity).</text>
</comment>
<comment type="subcellular location">
    <subcellularLocation>
        <location evidence="1">Cell membrane</location>
        <topology evidence="1">Multi-pass membrane protein</topology>
    </subcellularLocation>
</comment>
<comment type="similarity">
    <text evidence="3">Belongs to the SecG family.</text>
</comment>
<sequence length="102" mass="10716">MVACCHRAPVVHRRSSESEEVGPAVVLGFSIALIVFSLLLMLLVLMHKGKGGGLSDMFGGGMQSSVGGSSVAERNLDRITVVVGLAWFACIMVLGLLMKANN</sequence>
<protein>
    <recommendedName>
        <fullName>Protein-export membrane protein SecG</fullName>
    </recommendedName>
</protein>
<name>SECG_STRCO</name>
<organism>
    <name type="scientific">Streptomyces coelicolor (strain ATCC BAA-471 / A3(2) / M145)</name>
    <dbReference type="NCBI Taxonomy" id="100226"/>
    <lineage>
        <taxon>Bacteria</taxon>
        <taxon>Bacillati</taxon>
        <taxon>Actinomycetota</taxon>
        <taxon>Actinomycetes</taxon>
        <taxon>Kitasatosporales</taxon>
        <taxon>Streptomycetaceae</taxon>
        <taxon>Streptomyces</taxon>
        <taxon>Streptomyces albidoflavus group</taxon>
    </lineage>
</organism>
<dbReference type="EMBL" id="AL939110">
    <property type="protein sequence ID" value="CAB38134.1"/>
    <property type="molecule type" value="Genomic_DNA"/>
</dbReference>
<dbReference type="PIR" id="T36017">
    <property type="entry name" value="T36017"/>
</dbReference>
<dbReference type="RefSeq" id="NP_626208.1">
    <property type="nucleotide sequence ID" value="NC_003888.3"/>
</dbReference>
<dbReference type="SMR" id="Q9Z521"/>
<dbReference type="FunCoup" id="Q9Z521">
    <property type="interactions" value="17"/>
</dbReference>
<dbReference type="STRING" id="100226.gene:17759541"/>
<dbReference type="PaxDb" id="100226-SCO1944"/>
<dbReference type="KEGG" id="sco:SCO1944"/>
<dbReference type="PATRIC" id="fig|100226.15.peg.1971"/>
<dbReference type="eggNOG" id="COG1314">
    <property type="taxonomic scope" value="Bacteria"/>
</dbReference>
<dbReference type="HOGENOM" id="CLU_094156_7_1_11"/>
<dbReference type="InParanoid" id="Q9Z521"/>
<dbReference type="OrthoDB" id="4337190at2"/>
<dbReference type="Proteomes" id="UP000001973">
    <property type="component" value="Chromosome"/>
</dbReference>
<dbReference type="GO" id="GO:0005886">
    <property type="term" value="C:plasma membrane"/>
    <property type="evidence" value="ECO:0007669"/>
    <property type="project" value="UniProtKB-SubCell"/>
</dbReference>
<dbReference type="GO" id="GO:0015450">
    <property type="term" value="F:protein-transporting ATPase activity"/>
    <property type="evidence" value="ECO:0007669"/>
    <property type="project" value="InterPro"/>
</dbReference>
<dbReference type="GO" id="GO:0009306">
    <property type="term" value="P:protein secretion"/>
    <property type="evidence" value="ECO:0007669"/>
    <property type="project" value="InterPro"/>
</dbReference>
<dbReference type="InterPro" id="IPR004692">
    <property type="entry name" value="SecG"/>
</dbReference>
<dbReference type="NCBIfam" id="TIGR00810">
    <property type="entry name" value="secG"/>
    <property type="match status" value="1"/>
</dbReference>
<dbReference type="Pfam" id="PF03840">
    <property type="entry name" value="SecG"/>
    <property type="match status" value="1"/>
</dbReference>
<dbReference type="PRINTS" id="PR01651">
    <property type="entry name" value="SECGEXPORT"/>
</dbReference>